<accession>Q6NWG4</accession>
<accession>Q6PE31</accession>
<keyword id="KW-0156">Chromatin regulator</keyword>
<keyword id="KW-0227">DNA damage</keyword>
<keyword id="KW-0234">DNA repair</keyword>
<keyword id="KW-0488">Methylation</keyword>
<keyword id="KW-0489">Methyltransferase</keyword>
<keyword id="KW-0539">Nucleus</keyword>
<keyword id="KW-1185">Reference proteome</keyword>
<keyword id="KW-0678">Repressor</keyword>
<keyword id="KW-0949">S-adenosyl-L-methionine</keyword>
<keyword id="KW-0804">Transcription</keyword>
<keyword id="KW-0805">Transcription regulation</keyword>
<keyword id="KW-0808">Transferase</keyword>
<name>ANM6_DANRE</name>
<reference key="1">
    <citation type="submission" date="2004-03" db="EMBL/GenBank/DDBJ databases">
        <authorList>
            <consortium name="NIH - Zebrafish Gene Collection (ZGC) project"/>
        </authorList>
    </citation>
    <scope>NUCLEOTIDE SEQUENCE [LARGE SCALE MRNA]</scope>
    <source>
        <tissue>Kidney</tissue>
    </source>
</reference>
<organism>
    <name type="scientific">Danio rerio</name>
    <name type="common">Zebrafish</name>
    <name type="synonym">Brachydanio rerio</name>
    <dbReference type="NCBI Taxonomy" id="7955"/>
    <lineage>
        <taxon>Eukaryota</taxon>
        <taxon>Metazoa</taxon>
        <taxon>Chordata</taxon>
        <taxon>Craniata</taxon>
        <taxon>Vertebrata</taxon>
        <taxon>Euteleostomi</taxon>
        <taxon>Actinopterygii</taxon>
        <taxon>Neopterygii</taxon>
        <taxon>Teleostei</taxon>
        <taxon>Ostariophysi</taxon>
        <taxon>Cypriniformes</taxon>
        <taxon>Danionidae</taxon>
        <taxon>Danioninae</taxon>
        <taxon>Danio</taxon>
    </lineage>
</organism>
<protein>
    <recommendedName>
        <fullName>Protein arginine N-methyltransferase 6</fullName>
        <ecNumber evidence="3">2.1.1.319</ecNumber>
    </recommendedName>
    <alternativeName>
        <fullName>Histone-arginine N-methyltransferase PRMT6</fullName>
    </alternativeName>
</protein>
<feature type="chain" id="PRO_0000378150" description="Protein arginine N-methyltransferase 6">
    <location>
        <begin position="1"/>
        <end position="349"/>
    </location>
</feature>
<feature type="domain" description="SAM-dependent MTase PRMT-type" evidence="4">
    <location>
        <begin position="17"/>
        <end position="324"/>
    </location>
</feature>
<feature type="active site" evidence="1">
    <location>
        <position position="128"/>
    </location>
</feature>
<feature type="active site" evidence="1">
    <location>
        <position position="137"/>
    </location>
</feature>
<feature type="binding site" evidence="1">
    <location>
        <position position="30"/>
    </location>
    <ligand>
        <name>S-adenosyl-L-methionine</name>
        <dbReference type="ChEBI" id="CHEBI:59789"/>
    </ligand>
</feature>
<feature type="binding site" evidence="1">
    <location>
        <position position="39"/>
    </location>
    <ligand>
        <name>S-adenosyl-L-methionine</name>
        <dbReference type="ChEBI" id="CHEBI:59789"/>
    </ligand>
</feature>
<feature type="binding site" evidence="1">
    <location>
        <position position="63"/>
    </location>
    <ligand>
        <name>S-adenosyl-L-methionine</name>
        <dbReference type="ChEBI" id="CHEBI:59789"/>
    </ligand>
</feature>
<feature type="binding site" evidence="1">
    <location>
        <position position="85"/>
    </location>
    <ligand>
        <name>S-adenosyl-L-methionine</name>
        <dbReference type="ChEBI" id="CHEBI:59789"/>
    </ligand>
</feature>
<feature type="binding site" evidence="1">
    <location>
        <position position="114"/>
    </location>
    <ligand>
        <name>S-adenosyl-L-methionine</name>
        <dbReference type="ChEBI" id="CHEBI:59789"/>
    </ligand>
</feature>
<comment type="function">
    <text evidence="2">Arginine methyltransferase that can catalyze the formation of both omega-N monomethylarginine (MMA) and asymmetrical dimethylarginine (aDMA), with a strong preference for the formation of aDMA. Preferentially methylates arginyl residues present in a glycine and arginine-rich domain and displays preference for monomethylated substrates. Specifically mediates the asymmetric dimethylation of histone H3 'Arg-2' to form H3R2me2a. H3R2me2a represents a specific tag for epigenetic transcriptional repression and is mutually exclusive with methylation on histone H3 'Lys-4' (H3K4me2 and H3K4me3). Acts as a transcriptional repressor of various genes such as HOXA2, THBS1 and TP53. Repression of TP53 blocks cellular senescence. Also methylates histone H2A and H4 'Arg-3' (H2AR3me and H4R3me, respectively). Acts as a regulator of DNA base excision during DNA repair by mediating the methylation of DNA polymerase beta (POLB), leading to the stimulation of its polymerase activity by enhancing DNA binding and processivity. Methylates HMGA1. Regulates alternative splicing events. Acts as a transcriptional coactivator of a number of steroid hormone receptors including ESR1, ESR2, PGR and NR3C1.</text>
</comment>
<comment type="catalytic activity">
    <reaction evidence="3">
        <text>L-arginyl-[protein] + 2 S-adenosyl-L-methionine = N(omega),N(omega)-dimethyl-L-arginyl-[protein] + 2 S-adenosyl-L-homocysteine + 2 H(+)</text>
        <dbReference type="Rhea" id="RHEA:48096"/>
        <dbReference type="Rhea" id="RHEA-COMP:10532"/>
        <dbReference type="Rhea" id="RHEA-COMP:11991"/>
        <dbReference type="ChEBI" id="CHEBI:15378"/>
        <dbReference type="ChEBI" id="CHEBI:29965"/>
        <dbReference type="ChEBI" id="CHEBI:57856"/>
        <dbReference type="ChEBI" id="CHEBI:59789"/>
        <dbReference type="ChEBI" id="CHEBI:61897"/>
        <dbReference type="EC" id="2.1.1.319"/>
    </reaction>
</comment>
<comment type="subcellular location">
    <subcellularLocation>
        <location evidence="3">Nucleus</location>
    </subcellularLocation>
</comment>
<comment type="similarity">
    <text evidence="4">Belongs to the class I-like SAM-binding methyltransferase superfamily. Protein arginine N-methyltransferase family. PRMT6 subfamily.</text>
</comment>
<comment type="sequence caution" evidence="5">
    <conflict type="erroneous initiation">
        <sequence resource="EMBL-CDS" id="AAH67600"/>
    </conflict>
    <text>Extended N-terminus.</text>
</comment>
<evidence type="ECO:0000250" key="1"/>
<evidence type="ECO:0000250" key="2">
    <source>
        <dbReference type="UniProtKB" id="Q6NZB1"/>
    </source>
</evidence>
<evidence type="ECO:0000250" key="3">
    <source>
        <dbReference type="UniProtKB" id="Q96LA8"/>
    </source>
</evidence>
<evidence type="ECO:0000255" key="4">
    <source>
        <dbReference type="PROSITE-ProRule" id="PRU01015"/>
    </source>
</evidence>
<evidence type="ECO:0000305" key="5"/>
<dbReference type="EC" id="2.1.1.319" evidence="3"/>
<dbReference type="EMBL" id="BC058308">
    <property type="protein sequence ID" value="AAH58308.1"/>
    <property type="molecule type" value="mRNA"/>
</dbReference>
<dbReference type="EMBL" id="BC067600">
    <property type="protein sequence ID" value="AAH67600.1"/>
    <property type="status" value="ALT_INIT"/>
    <property type="molecule type" value="mRNA"/>
</dbReference>
<dbReference type="SMR" id="Q6NWG4"/>
<dbReference type="FunCoup" id="Q6NWG4">
    <property type="interactions" value="397"/>
</dbReference>
<dbReference type="STRING" id="7955.ENSDARP00000106043"/>
<dbReference type="PaxDb" id="7955-ENSDARP00000106043"/>
<dbReference type="AGR" id="ZFIN:ZDB-GENE-040914-7"/>
<dbReference type="ZFIN" id="ZDB-GENE-040914-7">
    <property type="gene designation" value="prmt6"/>
</dbReference>
<dbReference type="eggNOG" id="KOG1499">
    <property type="taxonomic scope" value="Eukaryota"/>
</dbReference>
<dbReference type="InParanoid" id="Q6NWG4"/>
<dbReference type="PhylomeDB" id="Q6NWG4"/>
<dbReference type="Reactome" id="R-DRE-3214858">
    <property type="pathway name" value="RMTs methylate histone arginines"/>
</dbReference>
<dbReference type="Reactome" id="R-DRE-8936459">
    <property type="pathway name" value="RUNX1 regulates genes involved in megakaryocyte differentiation and platelet function"/>
</dbReference>
<dbReference type="PRO" id="PR:Q6NWG4"/>
<dbReference type="Proteomes" id="UP000000437">
    <property type="component" value="Unplaced"/>
</dbReference>
<dbReference type="GO" id="GO:0005634">
    <property type="term" value="C:nucleus"/>
    <property type="evidence" value="ECO:0000250"/>
    <property type="project" value="UniProtKB"/>
</dbReference>
<dbReference type="GO" id="GO:0042393">
    <property type="term" value="F:histone binding"/>
    <property type="evidence" value="ECO:0000250"/>
    <property type="project" value="UniProtKB"/>
</dbReference>
<dbReference type="GO" id="GO:0070612">
    <property type="term" value="F:histone H2AR3 methyltransferase activity"/>
    <property type="evidence" value="ECO:0000250"/>
    <property type="project" value="UniProtKB"/>
</dbReference>
<dbReference type="GO" id="GO:0070611">
    <property type="term" value="F:histone H3R2 methyltransferase activity"/>
    <property type="evidence" value="ECO:0000250"/>
    <property type="project" value="UniProtKB"/>
</dbReference>
<dbReference type="GO" id="GO:0044020">
    <property type="term" value="F:histone H4R3 methyltransferase activity"/>
    <property type="evidence" value="ECO:0000250"/>
    <property type="project" value="UniProtKB"/>
</dbReference>
<dbReference type="GO" id="GO:0042054">
    <property type="term" value="F:histone methyltransferase activity"/>
    <property type="evidence" value="ECO:0000250"/>
    <property type="project" value="UniProtKB"/>
</dbReference>
<dbReference type="GO" id="GO:0016274">
    <property type="term" value="F:protein-arginine N-methyltransferase activity"/>
    <property type="evidence" value="ECO:0000250"/>
    <property type="project" value="UniProtKB"/>
</dbReference>
<dbReference type="GO" id="GO:0035242">
    <property type="term" value="F:protein-arginine omega-N asymmetric methyltransferase activity"/>
    <property type="evidence" value="ECO:0000250"/>
    <property type="project" value="UniProtKB"/>
</dbReference>
<dbReference type="GO" id="GO:0035241">
    <property type="term" value="F:protein-arginine omega-N monomethyltransferase activity"/>
    <property type="evidence" value="ECO:0000250"/>
    <property type="project" value="UniProtKB"/>
</dbReference>
<dbReference type="GO" id="GO:0006338">
    <property type="term" value="P:chromatin remodeling"/>
    <property type="evidence" value="ECO:0000318"/>
    <property type="project" value="GO_Central"/>
</dbReference>
<dbReference type="GO" id="GO:0006281">
    <property type="term" value="P:DNA repair"/>
    <property type="evidence" value="ECO:0007669"/>
    <property type="project" value="UniProtKB-KW"/>
</dbReference>
<dbReference type="GO" id="GO:0032259">
    <property type="term" value="P:methylation"/>
    <property type="evidence" value="ECO:0007669"/>
    <property type="project" value="UniProtKB-KW"/>
</dbReference>
<dbReference type="GO" id="GO:0045892">
    <property type="term" value="P:negative regulation of DNA-templated transcription"/>
    <property type="evidence" value="ECO:0000250"/>
    <property type="project" value="UniProtKB"/>
</dbReference>
<dbReference type="GO" id="GO:2000059">
    <property type="term" value="P:negative regulation of ubiquitin-dependent protein catabolic process"/>
    <property type="evidence" value="ECO:0000250"/>
    <property type="project" value="UniProtKB"/>
</dbReference>
<dbReference type="GO" id="GO:0006355">
    <property type="term" value="P:regulation of DNA-templated transcription"/>
    <property type="evidence" value="ECO:0000318"/>
    <property type="project" value="GO_Central"/>
</dbReference>
<dbReference type="CDD" id="cd02440">
    <property type="entry name" value="AdoMet_MTases"/>
    <property type="match status" value="1"/>
</dbReference>
<dbReference type="FunFam" id="3.40.50.150:FF:000016">
    <property type="entry name" value="Protein arginine N-methyltransferase 6"/>
    <property type="match status" value="1"/>
</dbReference>
<dbReference type="FunFam" id="2.70.160.11:FF:000009">
    <property type="entry name" value="protein arginine N-methyltransferase 6"/>
    <property type="match status" value="1"/>
</dbReference>
<dbReference type="Gene3D" id="2.70.160.11">
    <property type="entry name" value="Hnrnp arginine n-methyltransferase1"/>
    <property type="match status" value="1"/>
</dbReference>
<dbReference type="Gene3D" id="3.40.50.150">
    <property type="entry name" value="Vaccinia Virus protein VP39"/>
    <property type="match status" value="1"/>
</dbReference>
<dbReference type="InterPro" id="IPR025799">
    <property type="entry name" value="Arg_MeTrfase"/>
</dbReference>
<dbReference type="InterPro" id="IPR055135">
    <property type="entry name" value="PRMT_dom"/>
</dbReference>
<dbReference type="InterPro" id="IPR029063">
    <property type="entry name" value="SAM-dependent_MTases_sf"/>
</dbReference>
<dbReference type="PANTHER" id="PTHR11006">
    <property type="entry name" value="PROTEIN ARGININE N-METHYLTRANSFERASE"/>
    <property type="match status" value="1"/>
</dbReference>
<dbReference type="PANTHER" id="PTHR11006:SF73">
    <property type="entry name" value="PROTEIN ARGININE N-METHYLTRANSFERASE 6"/>
    <property type="match status" value="1"/>
</dbReference>
<dbReference type="Pfam" id="PF06325">
    <property type="entry name" value="PrmA"/>
    <property type="match status" value="1"/>
</dbReference>
<dbReference type="Pfam" id="PF22528">
    <property type="entry name" value="PRMT_C"/>
    <property type="match status" value="1"/>
</dbReference>
<dbReference type="SUPFAM" id="SSF53335">
    <property type="entry name" value="S-adenosyl-L-methionine-dependent methyltransferases"/>
    <property type="match status" value="1"/>
</dbReference>
<dbReference type="PROSITE" id="PS51678">
    <property type="entry name" value="SAM_MT_PRMT"/>
    <property type="match status" value="1"/>
</dbReference>
<sequence>MSQHATKKRKLDRSTEDYMYFDSYSDVTIHEEMIADTVRTNTYRMGIFKNSKSIEGKVVLDVGAGTGVLSLFCAQAGARKVYAVEASSIADQAVKIVKLNQMEDRIEVIKSTLETIELAEKVDVIVSEWMGYALLHESMLNSVIFARDKWLKPGGLILPSRADLYIAPINDVVVEGRLDFWSTVKGQYGVDMSCMTDFARKCIMNKDITVNPVTVEDVLSHPCKFAELDLNTVTLEQLRDVNGSFSCVCFGSSSIHAFCVWFTVTFPAEEKALVLSTSPFKAETHWKQAVLYLDDAVDVMQDTKVEGEISLYPSEENSRHICIRVDYVIGEQKKHSKSFSIPDQYLEVK</sequence>
<proteinExistence type="evidence at transcript level"/>
<gene>
    <name type="primary">prmt6</name>
</gene>